<evidence type="ECO:0000255" key="1">
    <source>
        <dbReference type="HAMAP-Rule" id="MF_01368"/>
    </source>
</evidence>
<evidence type="ECO:0000305" key="2"/>
<protein>
    <recommendedName>
        <fullName evidence="1">Large ribosomal subunit protein bL17</fullName>
    </recommendedName>
    <alternativeName>
        <fullName evidence="2">50S ribosomal protein L17</fullName>
    </alternativeName>
</protein>
<keyword id="KW-0687">Ribonucleoprotein</keyword>
<keyword id="KW-0689">Ribosomal protein</keyword>
<proteinExistence type="inferred from homology"/>
<gene>
    <name evidence="1" type="primary">rplQ</name>
    <name type="ordered locus">BPP0058</name>
</gene>
<dbReference type="EMBL" id="BX640423">
    <property type="protein sequence ID" value="CAE39799.1"/>
    <property type="molecule type" value="Genomic_DNA"/>
</dbReference>
<dbReference type="RefSeq" id="WP_003806934.1">
    <property type="nucleotide sequence ID" value="NC_002928.3"/>
</dbReference>
<dbReference type="SMR" id="Q7W2D0"/>
<dbReference type="GeneID" id="69600129"/>
<dbReference type="KEGG" id="bpa:BPP0058"/>
<dbReference type="HOGENOM" id="CLU_074407_2_0_4"/>
<dbReference type="Proteomes" id="UP000001421">
    <property type="component" value="Chromosome"/>
</dbReference>
<dbReference type="GO" id="GO:0022625">
    <property type="term" value="C:cytosolic large ribosomal subunit"/>
    <property type="evidence" value="ECO:0007669"/>
    <property type="project" value="TreeGrafter"/>
</dbReference>
<dbReference type="GO" id="GO:0003735">
    <property type="term" value="F:structural constituent of ribosome"/>
    <property type="evidence" value="ECO:0007669"/>
    <property type="project" value="InterPro"/>
</dbReference>
<dbReference type="GO" id="GO:0006412">
    <property type="term" value="P:translation"/>
    <property type="evidence" value="ECO:0007669"/>
    <property type="project" value="UniProtKB-UniRule"/>
</dbReference>
<dbReference type="FunFam" id="3.90.1030.10:FF:000001">
    <property type="entry name" value="50S ribosomal protein L17"/>
    <property type="match status" value="1"/>
</dbReference>
<dbReference type="Gene3D" id="3.90.1030.10">
    <property type="entry name" value="Ribosomal protein L17"/>
    <property type="match status" value="1"/>
</dbReference>
<dbReference type="HAMAP" id="MF_01368">
    <property type="entry name" value="Ribosomal_bL17"/>
    <property type="match status" value="1"/>
</dbReference>
<dbReference type="InterPro" id="IPR000456">
    <property type="entry name" value="Ribosomal_bL17"/>
</dbReference>
<dbReference type="InterPro" id="IPR047859">
    <property type="entry name" value="Ribosomal_bL17_CS"/>
</dbReference>
<dbReference type="InterPro" id="IPR036373">
    <property type="entry name" value="Ribosomal_bL17_sf"/>
</dbReference>
<dbReference type="NCBIfam" id="TIGR00059">
    <property type="entry name" value="L17"/>
    <property type="match status" value="1"/>
</dbReference>
<dbReference type="PANTHER" id="PTHR14413:SF16">
    <property type="entry name" value="LARGE RIBOSOMAL SUBUNIT PROTEIN BL17M"/>
    <property type="match status" value="1"/>
</dbReference>
<dbReference type="PANTHER" id="PTHR14413">
    <property type="entry name" value="RIBOSOMAL PROTEIN L17"/>
    <property type="match status" value="1"/>
</dbReference>
<dbReference type="Pfam" id="PF01196">
    <property type="entry name" value="Ribosomal_L17"/>
    <property type="match status" value="1"/>
</dbReference>
<dbReference type="SUPFAM" id="SSF64263">
    <property type="entry name" value="Prokaryotic ribosomal protein L17"/>
    <property type="match status" value="1"/>
</dbReference>
<dbReference type="PROSITE" id="PS01167">
    <property type="entry name" value="RIBOSOMAL_L17"/>
    <property type="match status" value="1"/>
</dbReference>
<feature type="chain" id="PRO_0000267836" description="Large ribosomal subunit protein bL17">
    <location>
        <begin position="1"/>
        <end position="131"/>
    </location>
</feature>
<comment type="subunit">
    <text evidence="1">Part of the 50S ribosomal subunit. Contacts protein L32.</text>
</comment>
<comment type="similarity">
    <text evidence="1">Belongs to the bacterial ribosomal protein bL17 family.</text>
</comment>
<reference key="1">
    <citation type="journal article" date="2003" name="Nat. Genet.">
        <title>Comparative analysis of the genome sequences of Bordetella pertussis, Bordetella parapertussis and Bordetella bronchiseptica.</title>
        <authorList>
            <person name="Parkhill J."/>
            <person name="Sebaihia M."/>
            <person name="Preston A."/>
            <person name="Murphy L.D."/>
            <person name="Thomson N.R."/>
            <person name="Harris D.E."/>
            <person name="Holden M.T.G."/>
            <person name="Churcher C.M."/>
            <person name="Bentley S.D."/>
            <person name="Mungall K.L."/>
            <person name="Cerdeno-Tarraga A.-M."/>
            <person name="Temple L."/>
            <person name="James K.D."/>
            <person name="Harris B."/>
            <person name="Quail M.A."/>
            <person name="Achtman M."/>
            <person name="Atkin R."/>
            <person name="Baker S."/>
            <person name="Basham D."/>
            <person name="Bason N."/>
            <person name="Cherevach I."/>
            <person name="Chillingworth T."/>
            <person name="Collins M."/>
            <person name="Cronin A."/>
            <person name="Davis P."/>
            <person name="Doggett J."/>
            <person name="Feltwell T."/>
            <person name="Goble A."/>
            <person name="Hamlin N."/>
            <person name="Hauser H."/>
            <person name="Holroyd S."/>
            <person name="Jagels K."/>
            <person name="Leather S."/>
            <person name="Moule S."/>
            <person name="Norberczak H."/>
            <person name="O'Neil S."/>
            <person name="Ormond D."/>
            <person name="Price C."/>
            <person name="Rabbinowitsch E."/>
            <person name="Rutter S."/>
            <person name="Sanders M."/>
            <person name="Saunders D."/>
            <person name="Seeger K."/>
            <person name="Sharp S."/>
            <person name="Simmonds M."/>
            <person name="Skelton J."/>
            <person name="Squares R."/>
            <person name="Squares S."/>
            <person name="Stevens K."/>
            <person name="Unwin L."/>
            <person name="Whitehead S."/>
            <person name="Barrell B.G."/>
            <person name="Maskell D.J."/>
        </authorList>
    </citation>
    <scope>NUCLEOTIDE SEQUENCE [LARGE SCALE GENOMIC DNA]</scope>
    <source>
        <strain>12822 / ATCC BAA-587 / NCTC 13253</strain>
    </source>
</reference>
<organism>
    <name type="scientific">Bordetella parapertussis (strain 12822 / ATCC BAA-587 / NCTC 13253)</name>
    <dbReference type="NCBI Taxonomy" id="257311"/>
    <lineage>
        <taxon>Bacteria</taxon>
        <taxon>Pseudomonadati</taxon>
        <taxon>Pseudomonadota</taxon>
        <taxon>Betaproteobacteria</taxon>
        <taxon>Burkholderiales</taxon>
        <taxon>Alcaligenaceae</taxon>
        <taxon>Bordetella</taxon>
    </lineage>
</organism>
<sequence>MRHGNGLRKLNRTSSHRLAMFRNMAVSLITHEAIKTTLPKAKELRRVIEPLITLGKEPTLANKRLAFARLRDRDAVVKLFAEIGPRYANRNGGYTRVLKMGFRQGDNAPMAFMELVDRPEVDASEADSDAE</sequence>
<name>RL17_BORPA</name>
<accession>Q7W2D0</accession>